<comment type="subunit">
    <text>May form oligomeric structures.</text>
</comment>
<comment type="subcellular location">
    <subcellularLocation>
        <location evidence="3">Cytoplasm</location>
    </subcellularLocation>
</comment>
<comment type="induction">
    <text evidence="2">By heat shock, arsenic, azetidine-2-carboxylate, cadmium, copper, ethanol and hydrogen peroxide.</text>
</comment>
<comment type="similarity">
    <text evidence="1">Belongs to the small heat shock protein (HSP20) family.</text>
</comment>
<comment type="sequence caution" evidence="3">
    <conflict type="frameshift">
        <sequence resource="EMBL-CDS" id="CAA53286"/>
    </conflict>
</comment>
<sequence>MSLIRRSNVFDPFSLDLWDPFDGFPFGSGSRSSGSIFPSFPRGTSSETAAFAGARIDWKETPEAHVFKADVPGLKKEEVKVEVEDGNVLQISGERSKEQEEKTDKWHRVERSSGKFLRRFRLPENTKPEQIKASMENGVLTVTVPKEEPKKPDVKSIQVTG</sequence>
<evidence type="ECO:0000255" key="1">
    <source>
        <dbReference type="PROSITE-ProRule" id="PRU00285"/>
    </source>
</evidence>
<evidence type="ECO:0000269" key="2">
    <source>
    </source>
</evidence>
<evidence type="ECO:0000305" key="3"/>
<dbReference type="EMBL" id="X75616">
    <property type="protein sequence ID" value="CAA53286.1"/>
    <property type="status" value="ALT_FRAME"/>
    <property type="molecule type" value="mRNA"/>
</dbReference>
<dbReference type="EMBL" id="U83670">
    <property type="protein sequence ID" value="AAC78393.1"/>
    <property type="molecule type" value="Genomic_DNA"/>
</dbReference>
<dbReference type="EMBL" id="AC135208">
    <property type="protein sequence ID" value="AAP06883.1"/>
    <property type="molecule type" value="Genomic_DNA"/>
</dbReference>
<dbReference type="EMBL" id="DP000009">
    <property type="protein sequence ID" value="ABF95156.1"/>
    <property type="molecule type" value="Genomic_DNA"/>
</dbReference>
<dbReference type="EMBL" id="AP008209">
    <property type="protein sequence ID" value="BAF11575.1"/>
    <property type="molecule type" value="Genomic_DNA"/>
</dbReference>
<dbReference type="EMBL" id="AP014959">
    <property type="protein sequence ID" value="BAS83421.1"/>
    <property type="molecule type" value="Genomic_DNA"/>
</dbReference>
<dbReference type="EMBL" id="CM000140">
    <property type="protein sequence ID" value="EAZ26379.1"/>
    <property type="molecule type" value="Genomic_DNA"/>
</dbReference>
<dbReference type="PIR" id="JC4377">
    <property type="entry name" value="JC4377"/>
</dbReference>
<dbReference type="RefSeq" id="XP_015631116.1">
    <property type="nucleotide sequence ID" value="XM_015775630.1"/>
</dbReference>
<dbReference type="SMR" id="Q84Q72"/>
<dbReference type="FunCoup" id="Q84Q72">
    <property type="interactions" value="450"/>
</dbReference>
<dbReference type="STRING" id="39947.Q84Q72"/>
<dbReference type="PaxDb" id="39947-Q84Q72"/>
<dbReference type="EnsemblPlants" id="Os03t0267000-01">
    <property type="protein sequence ID" value="Os03t0267000-01"/>
    <property type="gene ID" value="Os03g0267000"/>
</dbReference>
<dbReference type="Gramene" id="Os03t0267000-01">
    <property type="protein sequence ID" value="Os03t0267000-01"/>
    <property type="gene ID" value="Os03g0267000"/>
</dbReference>
<dbReference type="KEGG" id="dosa:Os03g0267000"/>
<dbReference type="eggNOG" id="KOG0710">
    <property type="taxonomic scope" value="Eukaryota"/>
</dbReference>
<dbReference type="HOGENOM" id="CLU_046737_5_0_1"/>
<dbReference type="InParanoid" id="Q84Q72"/>
<dbReference type="OMA" id="AHIFMAD"/>
<dbReference type="OrthoDB" id="5511210at2759"/>
<dbReference type="Proteomes" id="UP000000763">
    <property type="component" value="Chromosome 3"/>
</dbReference>
<dbReference type="Proteomes" id="UP000007752">
    <property type="component" value="Chromosome 3"/>
</dbReference>
<dbReference type="Proteomes" id="UP000059680">
    <property type="component" value="Chromosome 3"/>
</dbReference>
<dbReference type="ExpressionAtlas" id="Q84Q72">
    <property type="expression patterns" value="baseline and differential"/>
</dbReference>
<dbReference type="GO" id="GO:0005737">
    <property type="term" value="C:cytoplasm"/>
    <property type="evidence" value="ECO:0007669"/>
    <property type="project" value="UniProtKB-SubCell"/>
</dbReference>
<dbReference type="GO" id="GO:0051082">
    <property type="term" value="F:unfolded protein binding"/>
    <property type="evidence" value="ECO:0000318"/>
    <property type="project" value="GO_Central"/>
</dbReference>
<dbReference type="GO" id="GO:0051259">
    <property type="term" value="P:protein complex oligomerization"/>
    <property type="evidence" value="ECO:0000318"/>
    <property type="project" value="GO_Central"/>
</dbReference>
<dbReference type="GO" id="GO:0006457">
    <property type="term" value="P:protein folding"/>
    <property type="evidence" value="ECO:0000318"/>
    <property type="project" value="GO_Central"/>
</dbReference>
<dbReference type="GO" id="GO:0046685">
    <property type="term" value="P:response to arsenic-containing substance"/>
    <property type="evidence" value="ECO:0000270"/>
    <property type="project" value="UniProtKB"/>
</dbReference>
<dbReference type="GO" id="GO:0046686">
    <property type="term" value="P:response to cadmium ion"/>
    <property type="evidence" value="ECO:0000270"/>
    <property type="project" value="UniProtKB"/>
</dbReference>
<dbReference type="GO" id="GO:0046688">
    <property type="term" value="P:response to copper ion"/>
    <property type="evidence" value="ECO:0000270"/>
    <property type="project" value="UniProtKB"/>
</dbReference>
<dbReference type="GO" id="GO:0045471">
    <property type="term" value="P:response to ethanol"/>
    <property type="evidence" value="ECO:0000270"/>
    <property type="project" value="UniProtKB"/>
</dbReference>
<dbReference type="GO" id="GO:0009408">
    <property type="term" value="P:response to heat"/>
    <property type="evidence" value="ECO:0000270"/>
    <property type="project" value="UniProtKB"/>
</dbReference>
<dbReference type="GO" id="GO:0042542">
    <property type="term" value="P:response to hydrogen peroxide"/>
    <property type="evidence" value="ECO:0000270"/>
    <property type="project" value="UniProtKB"/>
</dbReference>
<dbReference type="GO" id="GO:0009651">
    <property type="term" value="P:response to salt stress"/>
    <property type="evidence" value="ECO:0000318"/>
    <property type="project" value="GO_Central"/>
</dbReference>
<dbReference type="CDD" id="cd06472">
    <property type="entry name" value="ACD_ScHsp26_like"/>
    <property type="match status" value="1"/>
</dbReference>
<dbReference type="FunFam" id="2.60.40.790:FF:000007">
    <property type="entry name" value="17.4 kDa class I heat shock protein"/>
    <property type="match status" value="1"/>
</dbReference>
<dbReference type="Gene3D" id="2.60.40.790">
    <property type="match status" value="1"/>
</dbReference>
<dbReference type="InterPro" id="IPR002068">
    <property type="entry name" value="A-crystallin/Hsp20_dom"/>
</dbReference>
<dbReference type="InterPro" id="IPR007052">
    <property type="entry name" value="CS_dom"/>
</dbReference>
<dbReference type="InterPro" id="IPR008978">
    <property type="entry name" value="HSP20-like_chaperone"/>
</dbReference>
<dbReference type="InterPro" id="IPR031107">
    <property type="entry name" value="Small_HSP"/>
</dbReference>
<dbReference type="PANTHER" id="PTHR11527">
    <property type="entry name" value="HEAT-SHOCK PROTEIN 20 FAMILY MEMBER"/>
    <property type="match status" value="1"/>
</dbReference>
<dbReference type="Pfam" id="PF00011">
    <property type="entry name" value="HSP20"/>
    <property type="match status" value="1"/>
</dbReference>
<dbReference type="SUPFAM" id="SSF49764">
    <property type="entry name" value="HSP20-like chaperones"/>
    <property type="match status" value="1"/>
</dbReference>
<dbReference type="PROSITE" id="PS01031">
    <property type="entry name" value="SHSP"/>
    <property type="match status" value="1"/>
</dbReference>
<accession>Q84Q72</accession>
<accession>A3AGE0</accession>
<accession>P93440</accession>
<accession>Q10NK2</accession>
<accession>Q40632</accession>
<keyword id="KW-0963">Cytoplasm</keyword>
<keyword id="KW-1185">Reference proteome</keyword>
<keyword id="KW-0346">Stress response</keyword>
<reference key="1">
    <citation type="journal article" date="1995" name="Gene">
        <title>Cloning and characterization of a cDNA encoding an 18.0-kDa class-I low-molecular-weight heat-shock protein from rice.</title>
        <authorList>
            <person name="Lee Y.-L."/>
            <person name="Chang P.-F.L."/>
            <person name="Yeh K.-W."/>
            <person name="Jinn T.-L."/>
            <person name="Kung C.-C."/>
            <person name="Lin W.-C."/>
            <person name="Chen Y.-M."/>
            <person name="Lin C.-Y."/>
        </authorList>
    </citation>
    <scope>NUCLEOTIDE SEQUENCE [MRNA]</scope>
    <source>
        <strain>cv. Tainung 67</strain>
    </source>
</reference>
<reference key="2">
    <citation type="online journal article" date="1998" name="Plant Gene Register">
        <title>Structure of Oryza sativa genes encoding three class I low molecular mass heat shock proteins.</title>
        <authorList>
            <person name="Guan J.-C."/>
            <person name="Chang F.-C."/>
            <person name="Tseng T.-S."/>
            <person name="Chang P.-F.L."/>
            <person name="Yeh K.-W."/>
            <person name="Chen Y.-M."/>
            <person name="Lin C.-Y."/>
        </authorList>
        <locator>PGR98-178</locator>
    </citation>
    <scope>NUCLEOTIDE SEQUENCE [GENOMIC DNA]</scope>
    <source>
        <strain>cv. Tainung 67</strain>
    </source>
</reference>
<reference key="3">
    <citation type="journal article" date="2005" name="Genome Res.">
        <title>Sequence, annotation, and analysis of synteny between rice chromosome 3 and diverged grass species.</title>
        <authorList>
            <consortium name="The rice chromosome 3 sequencing consortium"/>
            <person name="Buell C.R."/>
            <person name="Yuan Q."/>
            <person name="Ouyang S."/>
            <person name="Liu J."/>
            <person name="Zhu W."/>
            <person name="Wang A."/>
            <person name="Maiti R."/>
            <person name="Haas B."/>
            <person name="Wortman J."/>
            <person name="Pertea M."/>
            <person name="Jones K.M."/>
            <person name="Kim M."/>
            <person name="Overton L."/>
            <person name="Tsitrin T."/>
            <person name="Fadrosh D."/>
            <person name="Bera J."/>
            <person name="Weaver B."/>
            <person name="Jin S."/>
            <person name="Johri S."/>
            <person name="Reardon M."/>
            <person name="Webb K."/>
            <person name="Hill J."/>
            <person name="Moffat K."/>
            <person name="Tallon L."/>
            <person name="Van Aken S."/>
            <person name="Lewis M."/>
            <person name="Utterback T."/>
            <person name="Feldblyum T."/>
            <person name="Zismann V."/>
            <person name="Iobst S."/>
            <person name="Hsiao J."/>
            <person name="de Vazeille A.R."/>
            <person name="Salzberg S.L."/>
            <person name="White O."/>
            <person name="Fraser C.M."/>
            <person name="Yu Y."/>
            <person name="Kim H."/>
            <person name="Rambo T."/>
            <person name="Currie J."/>
            <person name="Collura K."/>
            <person name="Kernodle-Thompson S."/>
            <person name="Wei F."/>
            <person name="Kudrna K."/>
            <person name="Ammiraju J.S.S."/>
            <person name="Luo M."/>
            <person name="Goicoechea J.L."/>
            <person name="Wing R.A."/>
            <person name="Henry D."/>
            <person name="Oates R."/>
            <person name="Palmer M."/>
            <person name="Pries G."/>
            <person name="Saski C."/>
            <person name="Simmons J."/>
            <person name="Soderlund C."/>
            <person name="Nelson W."/>
            <person name="de la Bastide M."/>
            <person name="Spiegel L."/>
            <person name="Nascimento L."/>
            <person name="Huang E."/>
            <person name="Preston R."/>
            <person name="Zutavern T."/>
            <person name="Palmer L."/>
            <person name="O'Shaughnessy A."/>
            <person name="Dike S."/>
            <person name="McCombie W.R."/>
            <person name="Minx P."/>
            <person name="Cordum H."/>
            <person name="Wilson R."/>
            <person name="Jin W."/>
            <person name="Lee H.R."/>
            <person name="Jiang J."/>
            <person name="Jackson S."/>
        </authorList>
    </citation>
    <scope>NUCLEOTIDE SEQUENCE [LARGE SCALE GENOMIC DNA]</scope>
    <source>
        <strain>cv. Nipponbare</strain>
    </source>
</reference>
<reference key="4">
    <citation type="journal article" date="2005" name="Nature">
        <title>The map-based sequence of the rice genome.</title>
        <authorList>
            <consortium name="International rice genome sequencing project (IRGSP)"/>
        </authorList>
    </citation>
    <scope>NUCLEOTIDE SEQUENCE [LARGE SCALE GENOMIC DNA]</scope>
    <source>
        <strain>cv. Nipponbare</strain>
    </source>
</reference>
<reference key="5">
    <citation type="journal article" date="2008" name="Nucleic Acids Res.">
        <title>The rice annotation project database (RAP-DB): 2008 update.</title>
        <authorList>
            <consortium name="The rice annotation project (RAP)"/>
        </authorList>
    </citation>
    <scope>GENOME REANNOTATION</scope>
    <source>
        <strain>cv. Nipponbare</strain>
    </source>
</reference>
<reference key="6">
    <citation type="journal article" date="2013" name="Rice">
        <title>Improvement of the Oryza sativa Nipponbare reference genome using next generation sequence and optical map data.</title>
        <authorList>
            <person name="Kawahara Y."/>
            <person name="de la Bastide M."/>
            <person name="Hamilton J.P."/>
            <person name="Kanamori H."/>
            <person name="McCombie W.R."/>
            <person name="Ouyang S."/>
            <person name="Schwartz D.C."/>
            <person name="Tanaka T."/>
            <person name="Wu J."/>
            <person name="Zhou S."/>
            <person name="Childs K.L."/>
            <person name="Davidson R.M."/>
            <person name="Lin H."/>
            <person name="Quesada-Ocampo L."/>
            <person name="Vaillancourt B."/>
            <person name="Sakai H."/>
            <person name="Lee S.S."/>
            <person name="Kim J."/>
            <person name="Numa H."/>
            <person name="Itoh T."/>
            <person name="Buell C.R."/>
            <person name="Matsumoto T."/>
        </authorList>
    </citation>
    <scope>GENOME REANNOTATION</scope>
    <source>
        <strain>cv. Nipponbare</strain>
    </source>
</reference>
<reference key="7">
    <citation type="journal article" date="2005" name="PLoS Biol.">
        <title>The genomes of Oryza sativa: a history of duplications.</title>
        <authorList>
            <person name="Yu J."/>
            <person name="Wang J."/>
            <person name="Lin W."/>
            <person name="Li S."/>
            <person name="Li H."/>
            <person name="Zhou J."/>
            <person name="Ni P."/>
            <person name="Dong W."/>
            <person name="Hu S."/>
            <person name="Zeng C."/>
            <person name="Zhang J."/>
            <person name="Zhang Y."/>
            <person name="Li R."/>
            <person name="Xu Z."/>
            <person name="Li S."/>
            <person name="Li X."/>
            <person name="Zheng H."/>
            <person name="Cong L."/>
            <person name="Lin L."/>
            <person name="Yin J."/>
            <person name="Geng J."/>
            <person name="Li G."/>
            <person name="Shi J."/>
            <person name="Liu J."/>
            <person name="Lv H."/>
            <person name="Li J."/>
            <person name="Wang J."/>
            <person name="Deng Y."/>
            <person name="Ran L."/>
            <person name="Shi X."/>
            <person name="Wang X."/>
            <person name="Wu Q."/>
            <person name="Li C."/>
            <person name="Ren X."/>
            <person name="Wang J."/>
            <person name="Wang X."/>
            <person name="Li D."/>
            <person name="Liu D."/>
            <person name="Zhang X."/>
            <person name="Ji Z."/>
            <person name="Zhao W."/>
            <person name="Sun Y."/>
            <person name="Zhang Z."/>
            <person name="Bao J."/>
            <person name="Han Y."/>
            <person name="Dong L."/>
            <person name="Ji J."/>
            <person name="Chen P."/>
            <person name="Wu S."/>
            <person name="Liu J."/>
            <person name="Xiao Y."/>
            <person name="Bu D."/>
            <person name="Tan J."/>
            <person name="Yang L."/>
            <person name="Ye C."/>
            <person name="Zhang J."/>
            <person name="Xu J."/>
            <person name="Zhou Y."/>
            <person name="Yu Y."/>
            <person name="Zhang B."/>
            <person name="Zhuang S."/>
            <person name="Wei H."/>
            <person name="Liu B."/>
            <person name="Lei M."/>
            <person name="Yu H."/>
            <person name="Li Y."/>
            <person name="Xu H."/>
            <person name="Wei S."/>
            <person name="He X."/>
            <person name="Fang L."/>
            <person name="Zhang Z."/>
            <person name="Zhang Y."/>
            <person name="Huang X."/>
            <person name="Su Z."/>
            <person name="Tong W."/>
            <person name="Li J."/>
            <person name="Tong Z."/>
            <person name="Li S."/>
            <person name="Ye J."/>
            <person name="Wang L."/>
            <person name="Fang L."/>
            <person name="Lei T."/>
            <person name="Chen C.-S."/>
            <person name="Chen H.-C."/>
            <person name="Xu Z."/>
            <person name="Li H."/>
            <person name="Huang H."/>
            <person name="Zhang F."/>
            <person name="Xu H."/>
            <person name="Li N."/>
            <person name="Zhao C."/>
            <person name="Li S."/>
            <person name="Dong L."/>
            <person name="Huang Y."/>
            <person name="Li L."/>
            <person name="Xi Y."/>
            <person name="Qi Q."/>
            <person name="Li W."/>
            <person name="Zhang B."/>
            <person name="Hu W."/>
            <person name="Zhang Y."/>
            <person name="Tian X."/>
            <person name="Jiao Y."/>
            <person name="Liang X."/>
            <person name="Jin J."/>
            <person name="Gao L."/>
            <person name="Zheng W."/>
            <person name="Hao B."/>
            <person name="Liu S.-M."/>
            <person name="Wang W."/>
            <person name="Yuan L."/>
            <person name="Cao M."/>
            <person name="McDermott J."/>
            <person name="Samudrala R."/>
            <person name="Wang J."/>
            <person name="Wong G.K.-S."/>
            <person name="Yang H."/>
        </authorList>
    </citation>
    <scope>NUCLEOTIDE SEQUENCE [LARGE SCALE GENOMIC DNA]</scope>
    <source>
        <strain>cv. Nipponbare</strain>
    </source>
</reference>
<reference key="8">
    <citation type="journal article" date="2004" name="Plant Mol. Biol.">
        <title>Characterization of the genomic structures and selective expression profiles of nine class I small heat shock protein genes clustered on two chromosomes in rice (Oryza sativa L.).</title>
        <authorList>
            <person name="Guan J.-C."/>
            <person name="Jinn T.-L."/>
            <person name="Yeh C.-H."/>
            <person name="Feng S.-P."/>
            <person name="Chen Y.-M."/>
            <person name="Lin C.-Y."/>
        </authorList>
    </citation>
    <scope>INDUCTION</scope>
</reference>
<reference key="9">
    <citation type="journal article" date="2009" name="BMC Genomics">
        <title>Rice sHsp genes: genomic organization and expression profiling under stress and development.</title>
        <authorList>
            <person name="Sarkar N.K."/>
            <person name="Kim Y.-K."/>
            <person name="Grover A."/>
        </authorList>
    </citation>
    <scope>GENE FAMILY</scope>
</reference>
<gene>
    <name type="primary">HSP18.1</name>
    <name type="ordered locus">Os03g0267000</name>
    <name type="ordered locus">LOC_Os03g16030</name>
    <name type="ORF">OJ1364E02.11</name>
    <name type="ORF">OsJ_10262</name>
</gene>
<name>HS181_ORYSJ</name>
<proteinExistence type="evidence at transcript level"/>
<protein>
    <recommendedName>
        <fullName>18.1 kDa class I heat shock protein</fullName>
    </recommendedName>
    <alternativeName>
        <fullName>18.1 kDa heat shock protein</fullName>
        <shortName>OsHsp18.1</shortName>
    </alternativeName>
</protein>
<organism>
    <name type="scientific">Oryza sativa subsp. japonica</name>
    <name type="common">Rice</name>
    <dbReference type="NCBI Taxonomy" id="39947"/>
    <lineage>
        <taxon>Eukaryota</taxon>
        <taxon>Viridiplantae</taxon>
        <taxon>Streptophyta</taxon>
        <taxon>Embryophyta</taxon>
        <taxon>Tracheophyta</taxon>
        <taxon>Spermatophyta</taxon>
        <taxon>Magnoliopsida</taxon>
        <taxon>Liliopsida</taxon>
        <taxon>Poales</taxon>
        <taxon>Poaceae</taxon>
        <taxon>BOP clade</taxon>
        <taxon>Oryzoideae</taxon>
        <taxon>Oryzeae</taxon>
        <taxon>Oryzinae</taxon>
        <taxon>Oryza</taxon>
        <taxon>Oryza sativa</taxon>
    </lineage>
</organism>
<feature type="chain" id="PRO_0000233696" description="18.1 kDa class I heat shock protein">
    <location>
        <begin position="1"/>
        <end position="161"/>
    </location>
</feature>
<feature type="domain" description="sHSP" evidence="1">
    <location>
        <begin position="47"/>
        <end position="161"/>
    </location>
</feature>
<feature type="sequence conflict" description="In Ref. 1; CAA53286 and 2; AAC78393." evidence="3" ref="1 2">
    <original>S</original>
    <variation>T</variation>
    <location>
        <position position="35"/>
    </location>
</feature>
<feature type="sequence conflict" description="In Ref. 1; CAA53286 and 2; AAC78393." evidence="3" ref="1 2">
    <location>
        <position position="64"/>
    </location>
</feature>
<feature type="sequence conflict" description="In Ref. 1; CAA53286." evidence="3" ref="1">
    <original>R</original>
    <variation>A</variation>
    <location>
        <position position="111"/>
    </location>
</feature>
<feature type="sequence conflict" description="In Ref. 1; EAZ26379." evidence="3" ref="1">
    <original>F</original>
    <variation>Y</variation>
    <location>
        <position position="116"/>
    </location>
</feature>